<comment type="function">
    <text evidence="1">Mannosyltransferase involved in glycosylphosphatidylinositol-anchor biosynthesis. Transfers the first alpha-1,4-mannose to GlcN-acyl-PI during GPI precursor assembly. Required for cell wall integrity (By similarity).</text>
</comment>
<comment type="pathway">
    <text>Glycolipid biosynthesis; glycosylphosphatidylinositol-anchor biosynthesis.</text>
</comment>
<comment type="subcellular location">
    <subcellularLocation>
        <location evidence="1">Endoplasmic reticulum membrane</location>
        <topology evidence="1">Multi-pass membrane protein</topology>
    </subcellularLocation>
</comment>
<comment type="similarity">
    <text evidence="3">Belongs to the PIGM family.</text>
</comment>
<evidence type="ECO:0000250" key="1"/>
<evidence type="ECO:0000255" key="2"/>
<evidence type="ECO:0000305" key="3"/>
<dbReference type="EC" id="2.4.1.-"/>
<dbReference type="EMBL" id="AACD01000055">
    <property type="protein sequence ID" value="EAA63338.1"/>
    <property type="molecule type" value="Genomic_DNA"/>
</dbReference>
<dbReference type="EMBL" id="BN001306">
    <property type="protein sequence ID" value="CBF82844.1"/>
    <property type="molecule type" value="Genomic_DNA"/>
</dbReference>
<dbReference type="RefSeq" id="XP_660974.1">
    <property type="nucleotide sequence ID" value="XM_655882.1"/>
</dbReference>
<dbReference type="SMR" id="Q5B7W0"/>
<dbReference type="FunCoup" id="Q5B7W0">
    <property type="interactions" value="587"/>
</dbReference>
<dbReference type="STRING" id="227321.Q5B7W0"/>
<dbReference type="CAZy" id="GT50">
    <property type="family name" value="Glycosyltransferase Family 50"/>
</dbReference>
<dbReference type="EnsemblFungi" id="CBF82844">
    <property type="protein sequence ID" value="CBF82844"/>
    <property type="gene ID" value="ANIA_03370"/>
</dbReference>
<dbReference type="KEGG" id="ani:ANIA_03370"/>
<dbReference type="eggNOG" id="KOG3893">
    <property type="taxonomic scope" value="Eukaryota"/>
</dbReference>
<dbReference type="HOGENOM" id="CLU_024220_1_0_1"/>
<dbReference type="InParanoid" id="Q5B7W0"/>
<dbReference type="OMA" id="MLWFIGQ"/>
<dbReference type="OrthoDB" id="1741594at2759"/>
<dbReference type="UniPathway" id="UPA00196"/>
<dbReference type="Proteomes" id="UP000000560">
    <property type="component" value="Chromosome VI"/>
</dbReference>
<dbReference type="GO" id="GO:0005789">
    <property type="term" value="C:endoplasmic reticulum membrane"/>
    <property type="evidence" value="ECO:0007669"/>
    <property type="project" value="UniProtKB-SubCell"/>
</dbReference>
<dbReference type="GO" id="GO:1990529">
    <property type="term" value="C:glycosylphosphatidylinositol-mannosyltransferase I complex"/>
    <property type="evidence" value="ECO:0000318"/>
    <property type="project" value="GO_Central"/>
</dbReference>
<dbReference type="GO" id="GO:0051751">
    <property type="term" value="F:alpha-1,4-mannosyltransferase activity"/>
    <property type="evidence" value="ECO:0007669"/>
    <property type="project" value="InterPro"/>
</dbReference>
<dbReference type="GO" id="GO:0004376">
    <property type="term" value="F:glycolipid mannosyltransferase activity"/>
    <property type="evidence" value="ECO:0007669"/>
    <property type="project" value="InterPro"/>
</dbReference>
<dbReference type="GO" id="GO:0000030">
    <property type="term" value="F:mannosyltransferase activity"/>
    <property type="evidence" value="ECO:0000318"/>
    <property type="project" value="GO_Central"/>
</dbReference>
<dbReference type="GO" id="GO:0071555">
    <property type="term" value="P:cell wall organization"/>
    <property type="evidence" value="ECO:0007669"/>
    <property type="project" value="UniProtKB-KW"/>
</dbReference>
<dbReference type="GO" id="GO:0006506">
    <property type="term" value="P:GPI anchor biosynthetic process"/>
    <property type="evidence" value="ECO:0000318"/>
    <property type="project" value="GO_Central"/>
</dbReference>
<dbReference type="InterPro" id="IPR007704">
    <property type="entry name" value="PIG-M"/>
</dbReference>
<dbReference type="PANTHER" id="PTHR12886:SF0">
    <property type="entry name" value="GPI MANNOSYLTRANSFERASE 1"/>
    <property type="match status" value="1"/>
</dbReference>
<dbReference type="PANTHER" id="PTHR12886">
    <property type="entry name" value="PIG-M MANNOSYLTRANSFERASE"/>
    <property type="match status" value="1"/>
</dbReference>
<dbReference type="Pfam" id="PF05007">
    <property type="entry name" value="Mannosyl_trans"/>
    <property type="match status" value="1"/>
</dbReference>
<proteinExistence type="inferred from homology"/>
<feature type="chain" id="PRO_0000246229" description="GPI mannosyltransferase 1">
    <location>
        <begin position="1"/>
        <end position="443"/>
    </location>
</feature>
<feature type="transmembrane region" description="Helical" evidence="2">
    <location>
        <begin position="8"/>
        <end position="28"/>
    </location>
</feature>
<feature type="transmembrane region" description="Helical" evidence="2">
    <location>
        <begin position="68"/>
        <end position="88"/>
    </location>
</feature>
<feature type="transmembrane region" description="Helical" evidence="2">
    <location>
        <begin position="90"/>
        <end position="110"/>
    </location>
</feature>
<feature type="transmembrane region" description="Helical" evidence="2">
    <location>
        <begin position="136"/>
        <end position="156"/>
    </location>
</feature>
<feature type="transmembrane region" description="Helical" evidence="2">
    <location>
        <begin position="160"/>
        <end position="180"/>
    </location>
</feature>
<feature type="transmembrane region" description="Helical" evidence="2">
    <location>
        <begin position="232"/>
        <end position="252"/>
    </location>
</feature>
<feature type="transmembrane region" description="Helical" evidence="2">
    <location>
        <begin position="273"/>
        <end position="291"/>
    </location>
</feature>
<feature type="transmembrane region" description="Helical" evidence="2">
    <location>
        <begin position="302"/>
        <end position="322"/>
    </location>
</feature>
<feature type="transmembrane region" description="Helical" evidence="2">
    <location>
        <begin position="347"/>
        <end position="367"/>
    </location>
</feature>
<feature type="transmembrane region" description="Helical" evidence="2">
    <location>
        <begin position="374"/>
        <end position="394"/>
    </location>
</feature>
<feature type="transmembrane region" description="Helical" evidence="2">
    <location>
        <begin position="406"/>
        <end position="426"/>
    </location>
</feature>
<reference key="1">
    <citation type="journal article" date="2005" name="Nature">
        <title>Sequencing of Aspergillus nidulans and comparative analysis with A. fumigatus and A. oryzae.</title>
        <authorList>
            <person name="Galagan J.E."/>
            <person name="Calvo S.E."/>
            <person name="Cuomo C."/>
            <person name="Ma L.-J."/>
            <person name="Wortman J.R."/>
            <person name="Batzoglou S."/>
            <person name="Lee S.-I."/>
            <person name="Bastuerkmen M."/>
            <person name="Spevak C.C."/>
            <person name="Clutterbuck J."/>
            <person name="Kapitonov V."/>
            <person name="Jurka J."/>
            <person name="Scazzocchio C."/>
            <person name="Farman M.L."/>
            <person name="Butler J."/>
            <person name="Purcell S."/>
            <person name="Harris S."/>
            <person name="Braus G.H."/>
            <person name="Draht O."/>
            <person name="Busch S."/>
            <person name="D'Enfert C."/>
            <person name="Bouchier C."/>
            <person name="Goldman G.H."/>
            <person name="Bell-Pedersen D."/>
            <person name="Griffiths-Jones S."/>
            <person name="Doonan J.H."/>
            <person name="Yu J."/>
            <person name="Vienken K."/>
            <person name="Pain A."/>
            <person name="Freitag M."/>
            <person name="Selker E.U."/>
            <person name="Archer D.B."/>
            <person name="Penalva M.A."/>
            <person name="Oakley B.R."/>
            <person name="Momany M."/>
            <person name="Tanaka T."/>
            <person name="Kumagai T."/>
            <person name="Asai K."/>
            <person name="Machida M."/>
            <person name="Nierman W.C."/>
            <person name="Denning D.W."/>
            <person name="Caddick M.X."/>
            <person name="Hynes M."/>
            <person name="Paoletti M."/>
            <person name="Fischer R."/>
            <person name="Miller B.L."/>
            <person name="Dyer P.S."/>
            <person name="Sachs M.S."/>
            <person name="Osmani S.A."/>
            <person name="Birren B.W."/>
        </authorList>
    </citation>
    <scope>NUCLEOTIDE SEQUENCE [LARGE SCALE GENOMIC DNA]</scope>
    <source>
        <strain>FGSC A4 / ATCC 38163 / CBS 112.46 / NRRL 194 / M139</strain>
    </source>
</reference>
<reference key="2">
    <citation type="journal article" date="2009" name="Fungal Genet. Biol.">
        <title>The 2008 update of the Aspergillus nidulans genome annotation: a community effort.</title>
        <authorList>
            <person name="Wortman J.R."/>
            <person name="Gilsenan J.M."/>
            <person name="Joardar V."/>
            <person name="Deegan J."/>
            <person name="Clutterbuck J."/>
            <person name="Andersen M.R."/>
            <person name="Archer D."/>
            <person name="Bencina M."/>
            <person name="Braus G."/>
            <person name="Coutinho P."/>
            <person name="von Dohren H."/>
            <person name="Doonan J."/>
            <person name="Driessen A.J."/>
            <person name="Durek P."/>
            <person name="Espeso E."/>
            <person name="Fekete E."/>
            <person name="Flipphi M."/>
            <person name="Estrada C.G."/>
            <person name="Geysens S."/>
            <person name="Goldman G."/>
            <person name="de Groot P.W."/>
            <person name="Hansen K."/>
            <person name="Harris S.D."/>
            <person name="Heinekamp T."/>
            <person name="Helmstaedt K."/>
            <person name="Henrissat B."/>
            <person name="Hofmann G."/>
            <person name="Homan T."/>
            <person name="Horio T."/>
            <person name="Horiuchi H."/>
            <person name="James S."/>
            <person name="Jones M."/>
            <person name="Karaffa L."/>
            <person name="Karanyi Z."/>
            <person name="Kato M."/>
            <person name="Keller N."/>
            <person name="Kelly D.E."/>
            <person name="Kiel J.A."/>
            <person name="Kim J.M."/>
            <person name="van der Klei I.J."/>
            <person name="Klis F.M."/>
            <person name="Kovalchuk A."/>
            <person name="Krasevec N."/>
            <person name="Kubicek C.P."/>
            <person name="Liu B."/>
            <person name="Maccabe A."/>
            <person name="Meyer V."/>
            <person name="Mirabito P."/>
            <person name="Miskei M."/>
            <person name="Mos M."/>
            <person name="Mullins J."/>
            <person name="Nelson D.R."/>
            <person name="Nielsen J."/>
            <person name="Oakley B.R."/>
            <person name="Osmani S.A."/>
            <person name="Pakula T."/>
            <person name="Paszewski A."/>
            <person name="Paulsen I."/>
            <person name="Pilsyk S."/>
            <person name="Pocsi I."/>
            <person name="Punt P.J."/>
            <person name="Ram A.F."/>
            <person name="Ren Q."/>
            <person name="Robellet X."/>
            <person name="Robson G."/>
            <person name="Seiboth B."/>
            <person name="van Solingen P."/>
            <person name="Specht T."/>
            <person name="Sun J."/>
            <person name="Taheri-Talesh N."/>
            <person name="Takeshita N."/>
            <person name="Ussery D."/>
            <person name="vanKuyk P.A."/>
            <person name="Visser H."/>
            <person name="van de Vondervoort P.J."/>
            <person name="de Vries R.P."/>
            <person name="Walton J."/>
            <person name="Xiang X."/>
            <person name="Xiong Y."/>
            <person name="Zeng A.P."/>
            <person name="Brandt B.W."/>
            <person name="Cornell M.J."/>
            <person name="van den Hondel C.A."/>
            <person name="Visser J."/>
            <person name="Oliver S.G."/>
            <person name="Turner G."/>
        </authorList>
    </citation>
    <scope>GENOME REANNOTATION</scope>
    <source>
        <strain>FGSC A4 / ATCC 38163 / CBS 112.46 / NRRL 194 / M139</strain>
    </source>
</reference>
<organism>
    <name type="scientific">Emericella nidulans (strain FGSC A4 / ATCC 38163 / CBS 112.46 / NRRL 194 / M139)</name>
    <name type="common">Aspergillus nidulans</name>
    <dbReference type="NCBI Taxonomy" id="227321"/>
    <lineage>
        <taxon>Eukaryota</taxon>
        <taxon>Fungi</taxon>
        <taxon>Dikarya</taxon>
        <taxon>Ascomycota</taxon>
        <taxon>Pezizomycotina</taxon>
        <taxon>Eurotiomycetes</taxon>
        <taxon>Eurotiomycetidae</taxon>
        <taxon>Eurotiales</taxon>
        <taxon>Aspergillaceae</taxon>
        <taxon>Aspergillus</taxon>
        <taxon>Aspergillus subgen. Nidulantes</taxon>
    </lineage>
</organism>
<gene>
    <name type="primary">gpi14</name>
    <name type="ORF">AN3370</name>
</gene>
<name>GPI14_EMENI</name>
<accession>Q5B7W0</accession>
<accession>C8VHQ4</accession>
<protein>
    <recommendedName>
        <fullName>GPI mannosyltransferase 1</fullName>
        <ecNumber>2.4.1.-</ecNumber>
    </recommendedName>
    <alternativeName>
        <fullName>GPI mannosyltransferase I</fullName>
        <shortName>GPI-MT-I</shortName>
    </alternativeName>
    <alternativeName>
        <fullName>Glycosylphosphatidylinositol-anchor biosynthesis protein 14</fullName>
    </alternativeName>
</protein>
<sequence length="443" mass="49341">MESLFKRPFMVYGLAAGLRTVLLFYGAWQDAHSAVKYTDIDYMVFTDASRYVSQGDSPYARDTYRYTPLLAWMLLPTTWAIPGFFSFGKALFALSDVVAGWLVAKSLTLTHGMSAERALKYASFWLLNPMVANISTRGSSEGLLGVLVVALLWAVLNRRIYLGGVLLGIGVHFKIYPFIYGMSILWWLDEKEFTTNKAQSESREVKPKFKDTPVGIFISQILSFITPCRIRLTLISLLTFVALNAAMYLHYGTPFLQHTYLHHLTRIDHRHNFSPYSTLLYLTAASSAGAVGHDAGGPSGSFESLAFIPQLLISVVVIPLVLGKKDLPGTMLAQTFAFVTFNKVCTSQYFLWYLIFLPFYLPTSSLLRNPRLGIAVAALWILGQALWLQQGYLLEFLGISSFLPGLFLASLGFFAVNAWILGVIVADVGGLNLESGNEKRRVK</sequence>
<keyword id="KW-0961">Cell wall biogenesis/degradation</keyword>
<keyword id="KW-0256">Endoplasmic reticulum</keyword>
<keyword id="KW-0328">Glycosyltransferase</keyword>
<keyword id="KW-0337">GPI-anchor biosynthesis</keyword>
<keyword id="KW-0472">Membrane</keyword>
<keyword id="KW-1185">Reference proteome</keyword>
<keyword id="KW-0808">Transferase</keyword>
<keyword id="KW-0812">Transmembrane</keyword>
<keyword id="KW-1133">Transmembrane helix</keyword>